<organism>
    <name type="scientific">Bacillus velezensis (strain DSM 23117 / BGSC 10A6 / LMG 26770 / FZB42)</name>
    <name type="common">Bacillus amyloliquefaciens subsp. plantarum</name>
    <dbReference type="NCBI Taxonomy" id="326423"/>
    <lineage>
        <taxon>Bacteria</taxon>
        <taxon>Bacillati</taxon>
        <taxon>Bacillota</taxon>
        <taxon>Bacilli</taxon>
        <taxon>Bacillales</taxon>
        <taxon>Bacillaceae</taxon>
        <taxon>Bacillus</taxon>
        <taxon>Bacillus amyloliquefaciens group</taxon>
    </lineage>
</organism>
<gene>
    <name evidence="1" type="primary">proA</name>
    <name type="ordered locus">RBAM_012940</name>
</gene>
<keyword id="KW-0028">Amino-acid biosynthesis</keyword>
<keyword id="KW-0963">Cytoplasm</keyword>
<keyword id="KW-0521">NADP</keyword>
<keyword id="KW-0560">Oxidoreductase</keyword>
<keyword id="KW-0641">Proline biosynthesis</keyword>
<feature type="chain" id="PRO_1000049935" description="Gamma-glutamyl phosphate reductase">
    <location>
        <begin position="1"/>
        <end position="415"/>
    </location>
</feature>
<evidence type="ECO:0000255" key="1">
    <source>
        <dbReference type="HAMAP-Rule" id="MF_00412"/>
    </source>
</evidence>
<protein>
    <recommendedName>
        <fullName evidence="1">Gamma-glutamyl phosphate reductase</fullName>
        <shortName evidence="1">GPR</shortName>
        <ecNumber evidence="1">1.2.1.41</ecNumber>
    </recommendedName>
    <alternativeName>
        <fullName evidence="1">Glutamate-5-semialdehyde dehydrogenase</fullName>
    </alternativeName>
    <alternativeName>
        <fullName evidence="1">Glutamyl-gamma-semialdehyde dehydrogenase</fullName>
        <shortName evidence="1">GSA dehydrogenase</shortName>
    </alternativeName>
</protein>
<reference key="1">
    <citation type="journal article" date="2007" name="Nat. Biotechnol.">
        <title>Comparative analysis of the complete genome sequence of the plant growth-promoting bacterium Bacillus amyloliquefaciens FZB42.</title>
        <authorList>
            <person name="Chen X.H."/>
            <person name="Koumoutsi A."/>
            <person name="Scholz R."/>
            <person name="Eisenreich A."/>
            <person name="Schneider K."/>
            <person name="Heinemeyer I."/>
            <person name="Morgenstern B."/>
            <person name="Voss B."/>
            <person name="Hess W.R."/>
            <person name="Reva O."/>
            <person name="Junge H."/>
            <person name="Voigt B."/>
            <person name="Jungblut P.R."/>
            <person name="Vater J."/>
            <person name="Suessmuth R."/>
            <person name="Liesegang H."/>
            <person name="Strittmatter A."/>
            <person name="Gottschalk G."/>
            <person name="Borriss R."/>
        </authorList>
    </citation>
    <scope>NUCLEOTIDE SEQUENCE [LARGE SCALE GENOMIC DNA]</scope>
    <source>
        <strain>DSM 23117 / BGSC 10A6 / LMG 26770 / FZB42</strain>
    </source>
</reference>
<sequence>MSEVLQKAALAKEAAAEMVMKTTAEKNEALQCIADGLRNERRLILTENQKDIEAGRNRGLTPDIIDRLTLDEKRLLDIADAVELLIGLEDPVGESLETIQKENGLSIEKIRVPLGVVGMIYEARPNVTVDAATLCLKTGNAVVLRGSSSAIHSNIALVSVMKRALGLSKLPIDAVQLIEDTSKETAKQLFTLNDGLDVLIPRGGKNLIDLVVRESTVPVLETGAGNCHVYIDESADPQMASEVVINAKTQRPSVCNAIESLLIHEKWAEEHGRKLLNQLTEKGVELRGDQVICRLEPQAKQAEEADWGAEYLAPILSVKTVQDVQEAVRHIQQYGTNHSEAILTENAEHAAYFQTAVDAAAVYHNASTRFTDGFEFGYGAEIGISTQKLHARGPMGLPALTSTKIIIKGNGQIRV</sequence>
<comment type="function">
    <text evidence="1">Catalyzes the NADPH-dependent reduction of L-glutamate 5-phosphate into L-glutamate 5-semialdehyde and phosphate. The product spontaneously undergoes cyclization to form 1-pyrroline-5-carboxylate.</text>
</comment>
<comment type="catalytic activity">
    <reaction evidence="1">
        <text>L-glutamate 5-semialdehyde + phosphate + NADP(+) = L-glutamyl 5-phosphate + NADPH + H(+)</text>
        <dbReference type="Rhea" id="RHEA:19541"/>
        <dbReference type="ChEBI" id="CHEBI:15378"/>
        <dbReference type="ChEBI" id="CHEBI:43474"/>
        <dbReference type="ChEBI" id="CHEBI:57783"/>
        <dbReference type="ChEBI" id="CHEBI:58066"/>
        <dbReference type="ChEBI" id="CHEBI:58274"/>
        <dbReference type="ChEBI" id="CHEBI:58349"/>
        <dbReference type="EC" id="1.2.1.41"/>
    </reaction>
</comment>
<comment type="pathway">
    <text evidence="1">Amino-acid biosynthesis; L-proline biosynthesis; L-glutamate 5-semialdehyde from L-glutamate: step 2/2.</text>
</comment>
<comment type="subcellular location">
    <subcellularLocation>
        <location evidence="1">Cytoplasm</location>
    </subcellularLocation>
</comment>
<comment type="similarity">
    <text evidence="1">Belongs to the gamma-glutamyl phosphate reductase family.</text>
</comment>
<name>PROA_BACVZ</name>
<accession>A7Z3T1</accession>
<proteinExistence type="inferred from homology"/>
<dbReference type="EC" id="1.2.1.41" evidence="1"/>
<dbReference type="EMBL" id="CP000560">
    <property type="protein sequence ID" value="ABS73657.1"/>
    <property type="molecule type" value="Genomic_DNA"/>
</dbReference>
<dbReference type="RefSeq" id="WP_012117384.1">
    <property type="nucleotide sequence ID" value="NC_009725.2"/>
</dbReference>
<dbReference type="SMR" id="A7Z3T1"/>
<dbReference type="GeneID" id="93080430"/>
<dbReference type="KEGG" id="bay:RBAM_012940"/>
<dbReference type="HOGENOM" id="CLU_030231_0_0_9"/>
<dbReference type="UniPathway" id="UPA00098">
    <property type="reaction ID" value="UER00360"/>
</dbReference>
<dbReference type="Proteomes" id="UP000001120">
    <property type="component" value="Chromosome"/>
</dbReference>
<dbReference type="GO" id="GO:0005737">
    <property type="term" value="C:cytoplasm"/>
    <property type="evidence" value="ECO:0007669"/>
    <property type="project" value="UniProtKB-SubCell"/>
</dbReference>
<dbReference type="GO" id="GO:0004350">
    <property type="term" value="F:glutamate-5-semialdehyde dehydrogenase activity"/>
    <property type="evidence" value="ECO:0007669"/>
    <property type="project" value="UniProtKB-UniRule"/>
</dbReference>
<dbReference type="GO" id="GO:0050661">
    <property type="term" value="F:NADP binding"/>
    <property type="evidence" value="ECO:0007669"/>
    <property type="project" value="InterPro"/>
</dbReference>
<dbReference type="GO" id="GO:0055129">
    <property type="term" value="P:L-proline biosynthetic process"/>
    <property type="evidence" value="ECO:0007669"/>
    <property type="project" value="UniProtKB-UniRule"/>
</dbReference>
<dbReference type="CDD" id="cd07079">
    <property type="entry name" value="ALDH_F18-19_ProA-GPR"/>
    <property type="match status" value="1"/>
</dbReference>
<dbReference type="FunFam" id="3.40.309.10:FF:000006">
    <property type="entry name" value="Gamma-glutamyl phosphate reductase"/>
    <property type="match status" value="1"/>
</dbReference>
<dbReference type="Gene3D" id="3.40.605.10">
    <property type="entry name" value="Aldehyde Dehydrogenase, Chain A, domain 1"/>
    <property type="match status" value="1"/>
</dbReference>
<dbReference type="Gene3D" id="3.40.309.10">
    <property type="entry name" value="Aldehyde Dehydrogenase, Chain A, domain 2"/>
    <property type="match status" value="1"/>
</dbReference>
<dbReference type="HAMAP" id="MF_00412">
    <property type="entry name" value="ProA"/>
    <property type="match status" value="1"/>
</dbReference>
<dbReference type="InterPro" id="IPR016161">
    <property type="entry name" value="Ald_DH/histidinol_DH"/>
</dbReference>
<dbReference type="InterPro" id="IPR016163">
    <property type="entry name" value="Ald_DH_C"/>
</dbReference>
<dbReference type="InterPro" id="IPR016162">
    <property type="entry name" value="Ald_DH_N"/>
</dbReference>
<dbReference type="InterPro" id="IPR015590">
    <property type="entry name" value="Aldehyde_DH_dom"/>
</dbReference>
<dbReference type="InterPro" id="IPR020593">
    <property type="entry name" value="G-glutamylP_reductase_CS"/>
</dbReference>
<dbReference type="InterPro" id="IPR012134">
    <property type="entry name" value="Glu-5-SA_DH"/>
</dbReference>
<dbReference type="InterPro" id="IPR000965">
    <property type="entry name" value="GPR_dom"/>
</dbReference>
<dbReference type="NCBIfam" id="NF001221">
    <property type="entry name" value="PRK00197.1"/>
    <property type="match status" value="1"/>
</dbReference>
<dbReference type="NCBIfam" id="TIGR00407">
    <property type="entry name" value="proA"/>
    <property type="match status" value="1"/>
</dbReference>
<dbReference type="PANTHER" id="PTHR11063:SF8">
    <property type="entry name" value="DELTA-1-PYRROLINE-5-CARBOXYLATE SYNTHASE"/>
    <property type="match status" value="1"/>
</dbReference>
<dbReference type="PANTHER" id="PTHR11063">
    <property type="entry name" value="GLUTAMATE SEMIALDEHYDE DEHYDROGENASE"/>
    <property type="match status" value="1"/>
</dbReference>
<dbReference type="Pfam" id="PF00171">
    <property type="entry name" value="Aldedh"/>
    <property type="match status" value="2"/>
</dbReference>
<dbReference type="PIRSF" id="PIRSF000151">
    <property type="entry name" value="GPR"/>
    <property type="match status" value="1"/>
</dbReference>
<dbReference type="SUPFAM" id="SSF53720">
    <property type="entry name" value="ALDH-like"/>
    <property type="match status" value="1"/>
</dbReference>
<dbReference type="PROSITE" id="PS01223">
    <property type="entry name" value="PROA"/>
    <property type="match status" value="1"/>
</dbReference>